<comment type="function">
    <text evidence="1">Catalyzes the hydrolytic cleavage of the carbon-nitrogen bond in imidazolone-5-propanoate to yield N-formimidoyl-L-glutamate. It is the third step in the universal histidine degradation pathway.</text>
</comment>
<comment type="catalytic activity">
    <reaction evidence="1">
        <text>4-imidazolone-5-propanoate + H2O = N-formimidoyl-L-glutamate</text>
        <dbReference type="Rhea" id="RHEA:23660"/>
        <dbReference type="ChEBI" id="CHEBI:15377"/>
        <dbReference type="ChEBI" id="CHEBI:58928"/>
        <dbReference type="ChEBI" id="CHEBI:77893"/>
        <dbReference type="EC" id="3.5.2.7"/>
    </reaction>
</comment>
<comment type="cofactor">
    <cofactor evidence="1">
        <name>Zn(2+)</name>
        <dbReference type="ChEBI" id="CHEBI:29105"/>
    </cofactor>
    <cofactor evidence="1">
        <name>Fe(3+)</name>
        <dbReference type="ChEBI" id="CHEBI:29034"/>
    </cofactor>
    <text evidence="1">Binds 1 zinc or iron ion per subunit.</text>
</comment>
<comment type="pathway">
    <text evidence="1">Amino-acid degradation; L-histidine degradation into L-glutamate; N-formimidoyl-L-glutamate from L-histidine: step 3/3.</text>
</comment>
<comment type="subcellular location">
    <subcellularLocation>
        <location evidence="1">Cytoplasm</location>
    </subcellularLocation>
</comment>
<comment type="similarity">
    <text evidence="1">Belongs to the metallo-dependent hydrolases superfamily. HutI family.</text>
</comment>
<sequence length="412" mass="45039">MNDLIINHIAELILPRSTDKPLKGKELDELNVVKNGTVVIKDGKIVYAGTHTDDYDATETIDASGKVVSPALVDAHTHLTFGGSREHEMSLKRQGKSYLEILEMGGGILSTVNATRETSEDDLFKKAEHDLLTMIKHGVLAVESKSGYGLDRENELKQLKVSNRLAEKYDLDMKHTFLGPHAVPKEASSNEAFLEEMIALLPEVKQYADFADIFCETGVFTIEQSQHYMQKAKEAGFKVKIHADEIDPLGGLELAIDEQAISADHLVASSDKGKEKLRNSDTVAVLLPATTFYLGKEDYADARGMLDNNGAIALATDYNPGSSVTNNLQLVMAIAALKLKLSPNEVWNAVTVNAAKAIDINAGTINTGDKANLVIWDAPNHEYIPYHFGINHAEKVIKDGKVIVDNTVSFKA</sequence>
<feature type="chain" id="PRO_1000072128" description="Imidazolonepropionase">
    <location>
        <begin position="1"/>
        <end position="412"/>
    </location>
</feature>
<feature type="binding site" evidence="1">
    <location>
        <position position="76"/>
    </location>
    <ligand>
        <name>Fe(3+)</name>
        <dbReference type="ChEBI" id="CHEBI:29034"/>
    </ligand>
</feature>
<feature type="binding site" evidence="1">
    <location>
        <position position="76"/>
    </location>
    <ligand>
        <name>Zn(2+)</name>
        <dbReference type="ChEBI" id="CHEBI:29105"/>
    </ligand>
</feature>
<feature type="binding site" evidence="1">
    <location>
        <position position="78"/>
    </location>
    <ligand>
        <name>Fe(3+)</name>
        <dbReference type="ChEBI" id="CHEBI:29034"/>
    </ligand>
</feature>
<feature type="binding site" evidence="1">
    <location>
        <position position="78"/>
    </location>
    <ligand>
        <name>Zn(2+)</name>
        <dbReference type="ChEBI" id="CHEBI:29105"/>
    </ligand>
</feature>
<feature type="binding site" evidence="1">
    <location>
        <position position="85"/>
    </location>
    <ligand>
        <name>4-imidazolone-5-propanoate</name>
        <dbReference type="ChEBI" id="CHEBI:77893"/>
    </ligand>
</feature>
<feature type="binding site" evidence="1">
    <location>
        <position position="148"/>
    </location>
    <ligand>
        <name>4-imidazolone-5-propanoate</name>
        <dbReference type="ChEBI" id="CHEBI:77893"/>
    </ligand>
</feature>
<feature type="binding site" evidence="1">
    <location>
        <position position="148"/>
    </location>
    <ligand>
        <name>N-formimidoyl-L-glutamate</name>
        <dbReference type="ChEBI" id="CHEBI:58928"/>
    </ligand>
</feature>
<feature type="binding site" evidence="1">
    <location>
        <position position="181"/>
    </location>
    <ligand>
        <name>4-imidazolone-5-propanoate</name>
        <dbReference type="ChEBI" id="CHEBI:77893"/>
    </ligand>
</feature>
<feature type="binding site" evidence="1">
    <location>
        <position position="242"/>
    </location>
    <ligand>
        <name>Fe(3+)</name>
        <dbReference type="ChEBI" id="CHEBI:29034"/>
    </ligand>
</feature>
<feature type="binding site" evidence="1">
    <location>
        <position position="242"/>
    </location>
    <ligand>
        <name>Zn(2+)</name>
        <dbReference type="ChEBI" id="CHEBI:29105"/>
    </ligand>
</feature>
<feature type="binding site" evidence="1">
    <location>
        <position position="245"/>
    </location>
    <ligand>
        <name>4-imidazolone-5-propanoate</name>
        <dbReference type="ChEBI" id="CHEBI:77893"/>
    </ligand>
</feature>
<feature type="binding site" evidence="1">
    <location>
        <position position="317"/>
    </location>
    <ligand>
        <name>Fe(3+)</name>
        <dbReference type="ChEBI" id="CHEBI:29034"/>
    </ligand>
</feature>
<feature type="binding site" evidence="1">
    <location>
        <position position="317"/>
    </location>
    <ligand>
        <name>Zn(2+)</name>
        <dbReference type="ChEBI" id="CHEBI:29105"/>
    </ligand>
</feature>
<feature type="binding site" evidence="1">
    <location>
        <position position="319"/>
    </location>
    <ligand>
        <name>N-formimidoyl-L-glutamate</name>
        <dbReference type="ChEBI" id="CHEBI:58928"/>
    </ligand>
</feature>
<feature type="binding site" evidence="1">
    <location>
        <position position="321"/>
    </location>
    <ligand>
        <name>N-formimidoyl-L-glutamate</name>
        <dbReference type="ChEBI" id="CHEBI:58928"/>
    </ligand>
</feature>
<feature type="binding site" evidence="1">
    <location>
        <position position="322"/>
    </location>
    <ligand>
        <name>4-imidazolone-5-propanoate</name>
        <dbReference type="ChEBI" id="CHEBI:77893"/>
    </ligand>
</feature>
<keyword id="KW-0963">Cytoplasm</keyword>
<keyword id="KW-0369">Histidine metabolism</keyword>
<keyword id="KW-0378">Hydrolase</keyword>
<keyword id="KW-0408">Iron</keyword>
<keyword id="KW-0479">Metal-binding</keyword>
<keyword id="KW-0862">Zinc</keyword>
<proteinExistence type="inferred from homology"/>
<name>HUTI_STAAE</name>
<gene>
    <name evidence="1" type="primary">hutI</name>
    <name type="ordered locus">NWMN_2231</name>
</gene>
<protein>
    <recommendedName>
        <fullName evidence="1">Imidazolonepropionase</fullName>
        <ecNumber evidence="1">3.5.2.7</ecNumber>
    </recommendedName>
    <alternativeName>
        <fullName evidence="1">Imidazolone-5-propionate hydrolase</fullName>
    </alternativeName>
</protein>
<organism>
    <name type="scientific">Staphylococcus aureus (strain Newman)</name>
    <dbReference type="NCBI Taxonomy" id="426430"/>
    <lineage>
        <taxon>Bacteria</taxon>
        <taxon>Bacillati</taxon>
        <taxon>Bacillota</taxon>
        <taxon>Bacilli</taxon>
        <taxon>Bacillales</taxon>
        <taxon>Staphylococcaceae</taxon>
        <taxon>Staphylococcus</taxon>
    </lineage>
</organism>
<reference key="1">
    <citation type="journal article" date="2008" name="J. Bacteriol.">
        <title>Genome sequence of Staphylococcus aureus strain Newman and comparative analysis of staphylococcal genomes: polymorphism and evolution of two major pathogenicity islands.</title>
        <authorList>
            <person name="Baba T."/>
            <person name="Bae T."/>
            <person name="Schneewind O."/>
            <person name="Takeuchi F."/>
            <person name="Hiramatsu K."/>
        </authorList>
    </citation>
    <scope>NUCLEOTIDE SEQUENCE [LARGE SCALE GENOMIC DNA]</scope>
    <source>
        <strain>Newman</strain>
    </source>
</reference>
<evidence type="ECO:0000255" key="1">
    <source>
        <dbReference type="HAMAP-Rule" id="MF_00372"/>
    </source>
</evidence>
<dbReference type="EC" id="3.5.2.7" evidence="1"/>
<dbReference type="EMBL" id="AP009351">
    <property type="protein sequence ID" value="BAF68503.1"/>
    <property type="molecule type" value="Genomic_DNA"/>
</dbReference>
<dbReference type="RefSeq" id="WP_000998767.1">
    <property type="nucleotide sequence ID" value="NZ_JBBIAE010000006.1"/>
</dbReference>
<dbReference type="SMR" id="A6QJH1"/>
<dbReference type="KEGG" id="sae:NWMN_2231"/>
<dbReference type="HOGENOM" id="CLU_041647_0_1_9"/>
<dbReference type="UniPathway" id="UPA00379">
    <property type="reaction ID" value="UER00551"/>
</dbReference>
<dbReference type="Proteomes" id="UP000006386">
    <property type="component" value="Chromosome"/>
</dbReference>
<dbReference type="GO" id="GO:0005737">
    <property type="term" value="C:cytoplasm"/>
    <property type="evidence" value="ECO:0007669"/>
    <property type="project" value="UniProtKB-SubCell"/>
</dbReference>
<dbReference type="GO" id="GO:0050480">
    <property type="term" value="F:imidazolonepropionase activity"/>
    <property type="evidence" value="ECO:0007669"/>
    <property type="project" value="UniProtKB-UniRule"/>
</dbReference>
<dbReference type="GO" id="GO:0005506">
    <property type="term" value="F:iron ion binding"/>
    <property type="evidence" value="ECO:0007669"/>
    <property type="project" value="UniProtKB-UniRule"/>
</dbReference>
<dbReference type="GO" id="GO:0008270">
    <property type="term" value="F:zinc ion binding"/>
    <property type="evidence" value="ECO:0007669"/>
    <property type="project" value="UniProtKB-UniRule"/>
</dbReference>
<dbReference type="GO" id="GO:0019556">
    <property type="term" value="P:L-histidine catabolic process to glutamate and formamide"/>
    <property type="evidence" value="ECO:0007669"/>
    <property type="project" value="UniProtKB-UniPathway"/>
</dbReference>
<dbReference type="GO" id="GO:0019557">
    <property type="term" value="P:L-histidine catabolic process to glutamate and formate"/>
    <property type="evidence" value="ECO:0007669"/>
    <property type="project" value="UniProtKB-UniPathway"/>
</dbReference>
<dbReference type="CDD" id="cd01296">
    <property type="entry name" value="Imidazolone-5PH"/>
    <property type="match status" value="1"/>
</dbReference>
<dbReference type="FunFam" id="3.20.20.140:FF:000007">
    <property type="entry name" value="Imidazolonepropionase"/>
    <property type="match status" value="1"/>
</dbReference>
<dbReference type="Gene3D" id="3.20.20.140">
    <property type="entry name" value="Metal-dependent hydrolases"/>
    <property type="match status" value="1"/>
</dbReference>
<dbReference type="Gene3D" id="2.30.40.10">
    <property type="entry name" value="Urease, subunit C, domain 1"/>
    <property type="match status" value="1"/>
</dbReference>
<dbReference type="HAMAP" id="MF_00372">
    <property type="entry name" value="HutI"/>
    <property type="match status" value="1"/>
</dbReference>
<dbReference type="InterPro" id="IPR006680">
    <property type="entry name" value="Amidohydro-rel"/>
</dbReference>
<dbReference type="InterPro" id="IPR005920">
    <property type="entry name" value="HutI"/>
</dbReference>
<dbReference type="InterPro" id="IPR011059">
    <property type="entry name" value="Metal-dep_hydrolase_composite"/>
</dbReference>
<dbReference type="InterPro" id="IPR032466">
    <property type="entry name" value="Metal_Hydrolase"/>
</dbReference>
<dbReference type="NCBIfam" id="TIGR01224">
    <property type="entry name" value="hutI"/>
    <property type="match status" value="1"/>
</dbReference>
<dbReference type="PANTHER" id="PTHR42752">
    <property type="entry name" value="IMIDAZOLONEPROPIONASE"/>
    <property type="match status" value="1"/>
</dbReference>
<dbReference type="PANTHER" id="PTHR42752:SF1">
    <property type="entry name" value="IMIDAZOLONEPROPIONASE-RELATED"/>
    <property type="match status" value="1"/>
</dbReference>
<dbReference type="Pfam" id="PF01979">
    <property type="entry name" value="Amidohydro_1"/>
    <property type="match status" value="1"/>
</dbReference>
<dbReference type="SUPFAM" id="SSF51338">
    <property type="entry name" value="Composite domain of metallo-dependent hydrolases"/>
    <property type="match status" value="1"/>
</dbReference>
<dbReference type="SUPFAM" id="SSF51556">
    <property type="entry name" value="Metallo-dependent hydrolases"/>
    <property type="match status" value="1"/>
</dbReference>
<accession>A6QJH1</accession>